<evidence type="ECO:0000255" key="1">
    <source>
        <dbReference type="HAMAP-Rule" id="MF_01632"/>
    </source>
</evidence>
<protein>
    <recommendedName>
        <fullName evidence="1">Probable chorismate pyruvate-lyase</fullName>
        <shortName evidence="1">CL</shortName>
        <shortName evidence="1">CPL</shortName>
        <ecNumber evidence="1">4.1.3.40</ecNumber>
    </recommendedName>
</protein>
<feature type="chain" id="PRO_0000240565" description="Probable chorismate pyruvate-lyase">
    <location>
        <begin position="1"/>
        <end position="168"/>
    </location>
</feature>
<feature type="binding site" evidence="1">
    <location>
        <position position="75"/>
    </location>
    <ligand>
        <name>substrate</name>
    </ligand>
</feature>
<feature type="binding site" evidence="1">
    <location>
        <position position="114"/>
    </location>
    <ligand>
        <name>substrate</name>
    </ligand>
</feature>
<feature type="binding site" evidence="1">
    <location>
        <position position="155"/>
    </location>
    <ligand>
        <name>substrate</name>
    </ligand>
</feature>
<organism>
    <name type="scientific">Psychrobacter cryohalolentis (strain ATCC BAA-1226 / DSM 17306 / VKM B-2378 / K5)</name>
    <dbReference type="NCBI Taxonomy" id="335284"/>
    <lineage>
        <taxon>Bacteria</taxon>
        <taxon>Pseudomonadati</taxon>
        <taxon>Pseudomonadota</taxon>
        <taxon>Gammaproteobacteria</taxon>
        <taxon>Moraxellales</taxon>
        <taxon>Moraxellaceae</taxon>
        <taxon>Psychrobacter</taxon>
    </lineage>
</organism>
<gene>
    <name evidence="1" type="primary">ubiC</name>
    <name type="ordered locus">Pcryo_0317</name>
</gene>
<name>UBIC_PSYCK</name>
<accession>Q1QE02</accession>
<reference key="1">
    <citation type="submission" date="2006-03" db="EMBL/GenBank/DDBJ databases">
        <title>Complete sequence of chromosome of Psychrobacter cryohalolentis K5.</title>
        <authorList>
            <consortium name="US DOE Joint Genome Institute"/>
            <person name="Copeland A."/>
            <person name="Lucas S."/>
            <person name="Lapidus A."/>
            <person name="Barry K."/>
            <person name="Detter J.C."/>
            <person name="Glavina T."/>
            <person name="Hammon N."/>
            <person name="Israni S."/>
            <person name="Dalin E."/>
            <person name="Tice H."/>
            <person name="Pitluck S."/>
            <person name="Brettin T."/>
            <person name="Bruce D."/>
            <person name="Han C."/>
            <person name="Tapia R."/>
            <person name="Sims D.R."/>
            <person name="Gilna P."/>
            <person name="Schmutz J."/>
            <person name="Larimer F."/>
            <person name="Land M."/>
            <person name="Hauser L."/>
            <person name="Kyrpides N."/>
            <person name="Kim E."/>
            <person name="Richardson P."/>
        </authorList>
    </citation>
    <scope>NUCLEOTIDE SEQUENCE [LARGE SCALE GENOMIC DNA]</scope>
    <source>
        <strain>ATCC BAA-1226 / DSM 17306 / VKM B-2378 / K5</strain>
    </source>
</reference>
<keyword id="KW-0963">Cytoplasm</keyword>
<keyword id="KW-0456">Lyase</keyword>
<keyword id="KW-0670">Pyruvate</keyword>
<keyword id="KW-0831">Ubiquinone biosynthesis</keyword>
<sequence length="168" mass="19264">MISHLSCITNSLPPTELLPWLNIEGSLTALLEVKAGRPLLVERRFEGYRLLSLAQKKQLGIKGAALSHPRLAWVREVYLYGNDELPWVQAQSLFPLSSLKGSARRLQQLKSTPIGYVLFNRSRTLPNQRSIKHTADGWQRQTLYDWHGRSLLISETFLPRFCEKQLDI</sequence>
<comment type="function">
    <text evidence="1">Removes the pyruvyl group from chorismate, with concomitant aromatization of the ring, to provide 4-hydroxybenzoate (4HB) for the ubiquinone pathway.</text>
</comment>
<comment type="catalytic activity">
    <reaction evidence="1">
        <text>chorismate = 4-hydroxybenzoate + pyruvate</text>
        <dbReference type="Rhea" id="RHEA:16505"/>
        <dbReference type="ChEBI" id="CHEBI:15361"/>
        <dbReference type="ChEBI" id="CHEBI:17879"/>
        <dbReference type="ChEBI" id="CHEBI:29748"/>
        <dbReference type="EC" id="4.1.3.40"/>
    </reaction>
</comment>
<comment type="pathway">
    <text evidence="1">Cofactor biosynthesis; ubiquinone biosynthesis.</text>
</comment>
<comment type="subcellular location">
    <subcellularLocation>
        <location evidence="1">Cytoplasm</location>
    </subcellularLocation>
</comment>
<comment type="similarity">
    <text evidence="1">Belongs to the UbiC family.</text>
</comment>
<dbReference type="EC" id="4.1.3.40" evidence="1"/>
<dbReference type="EMBL" id="CP000323">
    <property type="protein sequence ID" value="ABE74101.1"/>
    <property type="molecule type" value="Genomic_DNA"/>
</dbReference>
<dbReference type="RefSeq" id="WP_011512687.1">
    <property type="nucleotide sequence ID" value="NC_007969.1"/>
</dbReference>
<dbReference type="SMR" id="Q1QE02"/>
<dbReference type="STRING" id="335284.Pcryo_0317"/>
<dbReference type="KEGG" id="pcr:Pcryo_0317"/>
<dbReference type="eggNOG" id="COG3161">
    <property type="taxonomic scope" value="Bacteria"/>
</dbReference>
<dbReference type="HOGENOM" id="CLU_096824_2_1_6"/>
<dbReference type="UniPathway" id="UPA00232"/>
<dbReference type="Proteomes" id="UP000002425">
    <property type="component" value="Chromosome"/>
</dbReference>
<dbReference type="GO" id="GO:0005829">
    <property type="term" value="C:cytosol"/>
    <property type="evidence" value="ECO:0007669"/>
    <property type="project" value="TreeGrafter"/>
</dbReference>
<dbReference type="GO" id="GO:0008813">
    <property type="term" value="F:chorismate lyase activity"/>
    <property type="evidence" value="ECO:0007669"/>
    <property type="project" value="UniProtKB-UniRule"/>
</dbReference>
<dbReference type="GO" id="GO:0042866">
    <property type="term" value="P:pyruvate biosynthetic process"/>
    <property type="evidence" value="ECO:0007669"/>
    <property type="project" value="UniProtKB-UniRule"/>
</dbReference>
<dbReference type="GO" id="GO:0006744">
    <property type="term" value="P:ubiquinone biosynthetic process"/>
    <property type="evidence" value="ECO:0007669"/>
    <property type="project" value="UniProtKB-UniRule"/>
</dbReference>
<dbReference type="Gene3D" id="3.40.1410.10">
    <property type="entry name" value="Chorismate lyase-like"/>
    <property type="match status" value="1"/>
</dbReference>
<dbReference type="HAMAP" id="MF_01632">
    <property type="entry name" value="UbiC"/>
    <property type="match status" value="1"/>
</dbReference>
<dbReference type="InterPro" id="IPR007440">
    <property type="entry name" value="Chorismate--pyruvate_lyase"/>
</dbReference>
<dbReference type="InterPro" id="IPR028978">
    <property type="entry name" value="Chorismate_lyase_/UTRA_dom_sf"/>
</dbReference>
<dbReference type="PANTHER" id="PTHR38683">
    <property type="entry name" value="CHORISMATE PYRUVATE-LYASE"/>
    <property type="match status" value="1"/>
</dbReference>
<dbReference type="PANTHER" id="PTHR38683:SF1">
    <property type="entry name" value="CHORISMATE PYRUVATE-LYASE"/>
    <property type="match status" value="1"/>
</dbReference>
<dbReference type="Pfam" id="PF04345">
    <property type="entry name" value="Chor_lyase"/>
    <property type="match status" value="1"/>
</dbReference>
<dbReference type="SUPFAM" id="SSF64288">
    <property type="entry name" value="Chorismate lyase-like"/>
    <property type="match status" value="1"/>
</dbReference>
<proteinExistence type="inferred from homology"/>